<reference key="1">
    <citation type="journal article" date="2010" name="Mol. Phylogenet. Evol.">
        <title>Evolution of Conus peptide toxins: analysis of Conus californicus Reeve, 1844.</title>
        <authorList>
            <person name="Biggs J.S."/>
            <person name="Watkins M."/>
            <person name="Puillandre N."/>
            <person name="Ownby J.P."/>
            <person name="Lopez-Vera E."/>
            <person name="Christensen S."/>
            <person name="Moreno K.J."/>
            <person name="Bernaldez J."/>
            <person name="Licea-Navarro A."/>
            <person name="Corneli P.S."/>
            <person name="Olivera B.M."/>
        </authorList>
    </citation>
    <scope>NUCLEOTIDE SEQUENCE [GENOMIC DNA]</scope>
</reference>
<name>CUE7_CONCL</name>
<dbReference type="EMBL" id="FJ959138">
    <property type="protein sequence ID" value="ADB93108.1"/>
    <property type="molecule type" value="Genomic_DNA"/>
</dbReference>
<dbReference type="ConoServer" id="4023">
    <property type="toxin name" value="Cal14.7 precursor"/>
</dbReference>
<dbReference type="GO" id="GO:0005576">
    <property type="term" value="C:extracellular region"/>
    <property type="evidence" value="ECO:0007669"/>
    <property type="project" value="UniProtKB-SubCell"/>
</dbReference>
<dbReference type="GO" id="GO:0090729">
    <property type="term" value="F:toxin activity"/>
    <property type="evidence" value="ECO:0007669"/>
    <property type="project" value="UniProtKB-KW"/>
</dbReference>
<sequence length="39" mass="4230">MGDLSEADSMKHQLQRRDCGRCGLGQICDAGACRPSTMM</sequence>
<keyword id="KW-1015">Disulfide bond</keyword>
<keyword id="KW-0528">Neurotoxin</keyword>
<keyword id="KW-0964">Secreted</keyword>
<keyword id="KW-0800">Toxin</keyword>
<organism>
    <name type="scientific">Californiconus californicus</name>
    <name type="common">California cone</name>
    <name type="synonym">Conus californicus</name>
    <dbReference type="NCBI Taxonomy" id="1736779"/>
    <lineage>
        <taxon>Eukaryota</taxon>
        <taxon>Metazoa</taxon>
        <taxon>Spiralia</taxon>
        <taxon>Lophotrochozoa</taxon>
        <taxon>Mollusca</taxon>
        <taxon>Gastropoda</taxon>
        <taxon>Caenogastropoda</taxon>
        <taxon>Neogastropoda</taxon>
        <taxon>Conoidea</taxon>
        <taxon>Conidae</taxon>
        <taxon>Californiconus</taxon>
    </lineage>
</organism>
<protein>
    <recommendedName>
        <fullName evidence="2">Conotoxin Cl14.7</fullName>
    </recommendedName>
</protein>
<feature type="propeptide" id="PRO_0000415024" evidence="1">
    <location>
        <begin position="1" status="less than"/>
        <end position="15"/>
    </location>
</feature>
<feature type="peptide" id="PRO_0000415025" description="Conotoxin Cl14.7" evidence="4">
    <location>
        <begin position="18"/>
        <end position="39"/>
    </location>
</feature>
<feature type="non-terminal residue" evidence="4">
    <location>
        <position position="1"/>
    </location>
</feature>
<accession>D6C4J6</accession>
<evidence type="ECO:0000250" key="1"/>
<evidence type="ECO:0000303" key="2">
    <source>
    </source>
</evidence>
<evidence type="ECO:0000305" key="3"/>
<evidence type="ECO:0000305" key="4">
    <source>
    </source>
</evidence>
<proteinExistence type="inferred from homology"/>
<comment type="subcellular location">
    <subcellularLocation>
        <location evidence="3">Secreted</location>
    </subcellularLocation>
</comment>
<comment type="tissue specificity">
    <text evidence="3">Expressed by the venom duct.</text>
</comment>
<comment type="domain">
    <text evidence="3">The cysteine framework is XIV (C-C-C-C).</text>
</comment>
<comment type="PTM">
    <text evidence="3">Contains 2 disulfide bonds.</text>
</comment>